<sequence length="124" mass="13605">MATVNQLVRKPRAPKVDKTNVPALAACPQKRGVCTRVYTTTPKKPNSALRKVARVRLTNGFEVTSYIGGEGHNLQEHSVILIRGGRVKDLPGVRYHTVRGALDCAGVSERRQGRSKYGAKRPKS</sequence>
<name>RS12_SHEPA</name>
<dbReference type="EMBL" id="CP000851">
    <property type="protein sequence ID" value="ABV85508.1"/>
    <property type="molecule type" value="Genomic_DNA"/>
</dbReference>
<dbReference type="RefSeq" id="WP_012153454.1">
    <property type="nucleotide sequence ID" value="NC_009901.1"/>
</dbReference>
<dbReference type="SMR" id="A8GYX1"/>
<dbReference type="STRING" id="398579.Spea_0179"/>
<dbReference type="KEGG" id="spl:Spea_0179"/>
<dbReference type="eggNOG" id="COG0048">
    <property type="taxonomic scope" value="Bacteria"/>
</dbReference>
<dbReference type="HOGENOM" id="CLU_104295_1_2_6"/>
<dbReference type="OrthoDB" id="9802366at2"/>
<dbReference type="Proteomes" id="UP000002608">
    <property type="component" value="Chromosome"/>
</dbReference>
<dbReference type="GO" id="GO:0015935">
    <property type="term" value="C:small ribosomal subunit"/>
    <property type="evidence" value="ECO:0007669"/>
    <property type="project" value="InterPro"/>
</dbReference>
<dbReference type="GO" id="GO:0019843">
    <property type="term" value="F:rRNA binding"/>
    <property type="evidence" value="ECO:0007669"/>
    <property type="project" value="UniProtKB-UniRule"/>
</dbReference>
<dbReference type="GO" id="GO:0003735">
    <property type="term" value="F:structural constituent of ribosome"/>
    <property type="evidence" value="ECO:0007669"/>
    <property type="project" value="InterPro"/>
</dbReference>
<dbReference type="GO" id="GO:0000049">
    <property type="term" value="F:tRNA binding"/>
    <property type="evidence" value="ECO:0007669"/>
    <property type="project" value="UniProtKB-UniRule"/>
</dbReference>
<dbReference type="GO" id="GO:0006412">
    <property type="term" value="P:translation"/>
    <property type="evidence" value="ECO:0007669"/>
    <property type="project" value="UniProtKB-UniRule"/>
</dbReference>
<dbReference type="CDD" id="cd03368">
    <property type="entry name" value="Ribosomal_S12"/>
    <property type="match status" value="1"/>
</dbReference>
<dbReference type="FunFam" id="2.40.50.140:FF:000001">
    <property type="entry name" value="30S ribosomal protein S12"/>
    <property type="match status" value="1"/>
</dbReference>
<dbReference type="Gene3D" id="2.40.50.140">
    <property type="entry name" value="Nucleic acid-binding proteins"/>
    <property type="match status" value="1"/>
</dbReference>
<dbReference type="HAMAP" id="MF_00403_B">
    <property type="entry name" value="Ribosomal_uS12_B"/>
    <property type="match status" value="1"/>
</dbReference>
<dbReference type="InterPro" id="IPR012340">
    <property type="entry name" value="NA-bd_OB-fold"/>
</dbReference>
<dbReference type="InterPro" id="IPR006032">
    <property type="entry name" value="Ribosomal_uS12"/>
</dbReference>
<dbReference type="InterPro" id="IPR005679">
    <property type="entry name" value="Ribosomal_uS12_bac"/>
</dbReference>
<dbReference type="NCBIfam" id="TIGR00981">
    <property type="entry name" value="rpsL_bact"/>
    <property type="match status" value="1"/>
</dbReference>
<dbReference type="PANTHER" id="PTHR11652">
    <property type="entry name" value="30S RIBOSOMAL PROTEIN S12 FAMILY MEMBER"/>
    <property type="match status" value="1"/>
</dbReference>
<dbReference type="Pfam" id="PF00164">
    <property type="entry name" value="Ribosom_S12_S23"/>
    <property type="match status" value="1"/>
</dbReference>
<dbReference type="PIRSF" id="PIRSF002133">
    <property type="entry name" value="Ribosomal_S12/S23"/>
    <property type="match status" value="1"/>
</dbReference>
<dbReference type="PRINTS" id="PR01034">
    <property type="entry name" value="RIBOSOMALS12"/>
</dbReference>
<dbReference type="SUPFAM" id="SSF50249">
    <property type="entry name" value="Nucleic acid-binding proteins"/>
    <property type="match status" value="1"/>
</dbReference>
<dbReference type="PROSITE" id="PS00055">
    <property type="entry name" value="RIBOSOMAL_S12"/>
    <property type="match status" value="1"/>
</dbReference>
<comment type="function">
    <text evidence="2">With S4 and S5 plays an important role in translational accuracy.</text>
</comment>
<comment type="function">
    <text evidence="2">Interacts with and stabilizes bases of the 16S rRNA that are involved in tRNA selection in the A site and with the mRNA backbone. Located at the interface of the 30S and 50S subunits, it traverses the body of the 30S subunit contacting proteins on the other side and probably holding the rRNA structure together. The combined cluster of proteins S8, S12 and S17 appears to hold together the shoulder and platform of the 30S subunit.</text>
</comment>
<comment type="subunit">
    <text evidence="2">Part of the 30S ribosomal subunit. Contacts proteins S8 and S17. May interact with IF1 in the 30S initiation complex.</text>
</comment>
<comment type="similarity">
    <text evidence="2">Belongs to the universal ribosomal protein uS12 family.</text>
</comment>
<feature type="chain" id="PRO_1000080416" description="Small ribosomal subunit protein uS12">
    <location>
        <begin position="1"/>
        <end position="124"/>
    </location>
</feature>
<feature type="modified residue" description="3-methylthioaspartic acid" evidence="1">
    <location>
        <position position="89"/>
    </location>
</feature>
<accession>A8GYX1</accession>
<keyword id="KW-0488">Methylation</keyword>
<keyword id="KW-1185">Reference proteome</keyword>
<keyword id="KW-0687">Ribonucleoprotein</keyword>
<keyword id="KW-0689">Ribosomal protein</keyword>
<keyword id="KW-0694">RNA-binding</keyword>
<keyword id="KW-0699">rRNA-binding</keyword>
<keyword id="KW-0820">tRNA-binding</keyword>
<evidence type="ECO:0000250" key="1"/>
<evidence type="ECO:0000255" key="2">
    <source>
        <dbReference type="HAMAP-Rule" id="MF_00403"/>
    </source>
</evidence>
<evidence type="ECO:0000305" key="3"/>
<reference key="1">
    <citation type="submission" date="2007-10" db="EMBL/GenBank/DDBJ databases">
        <title>Complete sequence of Shewanella pealeana ATCC 700345.</title>
        <authorList>
            <consortium name="US DOE Joint Genome Institute"/>
            <person name="Copeland A."/>
            <person name="Lucas S."/>
            <person name="Lapidus A."/>
            <person name="Barry K."/>
            <person name="Glavina del Rio T."/>
            <person name="Dalin E."/>
            <person name="Tice H."/>
            <person name="Pitluck S."/>
            <person name="Chertkov O."/>
            <person name="Brettin T."/>
            <person name="Bruce D."/>
            <person name="Detter J.C."/>
            <person name="Han C."/>
            <person name="Schmutz J."/>
            <person name="Larimer F."/>
            <person name="Land M."/>
            <person name="Hauser L."/>
            <person name="Kyrpides N."/>
            <person name="Kim E."/>
            <person name="Zhao J.-S.Z."/>
            <person name="Manno D."/>
            <person name="Hawari J."/>
            <person name="Richardson P."/>
        </authorList>
    </citation>
    <scope>NUCLEOTIDE SEQUENCE [LARGE SCALE GENOMIC DNA]</scope>
    <source>
        <strain>ATCC 700345 / ANG-SQ1</strain>
    </source>
</reference>
<protein>
    <recommendedName>
        <fullName evidence="2">Small ribosomal subunit protein uS12</fullName>
    </recommendedName>
    <alternativeName>
        <fullName evidence="3">30S ribosomal protein S12</fullName>
    </alternativeName>
</protein>
<proteinExistence type="inferred from homology"/>
<gene>
    <name evidence="2" type="primary">rpsL</name>
    <name type="ordered locus">Spea_0179</name>
</gene>
<organism>
    <name type="scientific">Shewanella pealeana (strain ATCC 700345 / ANG-SQ1)</name>
    <dbReference type="NCBI Taxonomy" id="398579"/>
    <lineage>
        <taxon>Bacteria</taxon>
        <taxon>Pseudomonadati</taxon>
        <taxon>Pseudomonadota</taxon>
        <taxon>Gammaproteobacteria</taxon>
        <taxon>Alteromonadales</taxon>
        <taxon>Shewanellaceae</taxon>
        <taxon>Shewanella</taxon>
    </lineage>
</organism>